<proteinExistence type="inferred from homology"/>
<dbReference type="EC" id="6.1.1.7" evidence="1"/>
<dbReference type="EMBL" id="AE015929">
    <property type="protein sequence ID" value="AAO04900.1"/>
    <property type="molecule type" value="Genomic_DNA"/>
</dbReference>
<dbReference type="RefSeq" id="NP_764856.1">
    <property type="nucleotide sequence ID" value="NC_004461.1"/>
</dbReference>
<dbReference type="RefSeq" id="WP_002440135.1">
    <property type="nucleotide sequence ID" value="NZ_WBME01000053.1"/>
</dbReference>
<dbReference type="SMR" id="Q8CSA7"/>
<dbReference type="KEGG" id="sep:SE_1301"/>
<dbReference type="PATRIC" id="fig|176280.10.peg.1270"/>
<dbReference type="eggNOG" id="COG0013">
    <property type="taxonomic scope" value="Bacteria"/>
</dbReference>
<dbReference type="HOGENOM" id="CLU_004485_1_1_9"/>
<dbReference type="OrthoDB" id="9803884at2"/>
<dbReference type="Proteomes" id="UP000001411">
    <property type="component" value="Chromosome"/>
</dbReference>
<dbReference type="GO" id="GO:0005829">
    <property type="term" value="C:cytosol"/>
    <property type="evidence" value="ECO:0007669"/>
    <property type="project" value="TreeGrafter"/>
</dbReference>
<dbReference type="GO" id="GO:0004813">
    <property type="term" value="F:alanine-tRNA ligase activity"/>
    <property type="evidence" value="ECO:0007669"/>
    <property type="project" value="UniProtKB-UniRule"/>
</dbReference>
<dbReference type="GO" id="GO:0002161">
    <property type="term" value="F:aminoacyl-tRNA deacylase activity"/>
    <property type="evidence" value="ECO:0007669"/>
    <property type="project" value="TreeGrafter"/>
</dbReference>
<dbReference type="GO" id="GO:0005524">
    <property type="term" value="F:ATP binding"/>
    <property type="evidence" value="ECO:0007669"/>
    <property type="project" value="UniProtKB-UniRule"/>
</dbReference>
<dbReference type="GO" id="GO:0140096">
    <property type="term" value="F:catalytic activity, acting on a protein"/>
    <property type="evidence" value="ECO:0007669"/>
    <property type="project" value="UniProtKB-ARBA"/>
</dbReference>
<dbReference type="GO" id="GO:0016740">
    <property type="term" value="F:transferase activity"/>
    <property type="evidence" value="ECO:0007669"/>
    <property type="project" value="UniProtKB-ARBA"/>
</dbReference>
<dbReference type="GO" id="GO:0000049">
    <property type="term" value="F:tRNA binding"/>
    <property type="evidence" value="ECO:0007669"/>
    <property type="project" value="UniProtKB-KW"/>
</dbReference>
<dbReference type="GO" id="GO:0008270">
    <property type="term" value="F:zinc ion binding"/>
    <property type="evidence" value="ECO:0007669"/>
    <property type="project" value="UniProtKB-UniRule"/>
</dbReference>
<dbReference type="GO" id="GO:0006419">
    <property type="term" value="P:alanyl-tRNA aminoacylation"/>
    <property type="evidence" value="ECO:0007669"/>
    <property type="project" value="UniProtKB-UniRule"/>
</dbReference>
<dbReference type="CDD" id="cd00673">
    <property type="entry name" value="AlaRS_core"/>
    <property type="match status" value="1"/>
</dbReference>
<dbReference type="FunFam" id="2.40.30.130:FF:000001">
    <property type="entry name" value="Alanine--tRNA ligase"/>
    <property type="match status" value="1"/>
</dbReference>
<dbReference type="FunFam" id="3.10.310.40:FF:000001">
    <property type="entry name" value="Alanine--tRNA ligase"/>
    <property type="match status" value="1"/>
</dbReference>
<dbReference type="FunFam" id="3.30.54.20:FF:000001">
    <property type="entry name" value="Alanine--tRNA ligase"/>
    <property type="match status" value="1"/>
</dbReference>
<dbReference type="FunFam" id="3.30.930.10:FF:000046">
    <property type="entry name" value="Alanine--tRNA ligase"/>
    <property type="match status" value="1"/>
</dbReference>
<dbReference type="FunFam" id="3.30.980.10:FF:000004">
    <property type="entry name" value="Alanine--tRNA ligase, cytoplasmic"/>
    <property type="match status" value="1"/>
</dbReference>
<dbReference type="Gene3D" id="2.40.30.130">
    <property type="match status" value="1"/>
</dbReference>
<dbReference type="Gene3D" id="3.10.310.40">
    <property type="match status" value="1"/>
</dbReference>
<dbReference type="Gene3D" id="3.30.54.20">
    <property type="match status" value="1"/>
</dbReference>
<dbReference type="Gene3D" id="3.30.930.10">
    <property type="entry name" value="Bira Bifunctional Protein, Domain 2"/>
    <property type="match status" value="1"/>
</dbReference>
<dbReference type="Gene3D" id="3.30.980.10">
    <property type="entry name" value="Threonyl-trna Synthetase, Chain A, domain 2"/>
    <property type="match status" value="1"/>
</dbReference>
<dbReference type="HAMAP" id="MF_00036_B">
    <property type="entry name" value="Ala_tRNA_synth_B"/>
    <property type="match status" value="1"/>
</dbReference>
<dbReference type="InterPro" id="IPR045864">
    <property type="entry name" value="aa-tRNA-synth_II/BPL/LPL"/>
</dbReference>
<dbReference type="InterPro" id="IPR002318">
    <property type="entry name" value="Ala-tRNA-lgiase_IIc"/>
</dbReference>
<dbReference type="InterPro" id="IPR018162">
    <property type="entry name" value="Ala-tRNA-ligase_IIc_anticod-bd"/>
</dbReference>
<dbReference type="InterPro" id="IPR018165">
    <property type="entry name" value="Ala-tRNA-synth_IIc_core"/>
</dbReference>
<dbReference type="InterPro" id="IPR018164">
    <property type="entry name" value="Ala-tRNA-synth_IIc_N"/>
</dbReference>
<dbReference type="InterPro" id="IPR050058">
    <property type="entry name" value="Ala-tRNA_ligase"/>
</dbReference>
<dbReference type="InterPro" id="IPR023033">
    <property type="entry name" value="Ala_tRNA_ligase_euk/bac"/>
</dbReference>
<dbReference type="InterPro" id="IPR003156">
    <property type="entry name" value="DHHA1_dom"/>
</dbReference>
<dbReference type="InterPro" id="IPR018163">
    <property type="entry name" value="Thr/Ala-tRNA-synth_IIc_edit"/>
</dbReference>
<dbReference type="InterPro" id="IPR009000">
    <property type="entry name" value="Transl_B-barrel_sf"/>
</dbReference>
<dbReference type="InterPro" id="IPR012947">
    <property type="entry name" value="tRNA_SAD"/>
</dbReference>
<dbReference type="NCBIfam" id="TIGR00344">
    <property type="entry name" value="alaS"/>
    <property type="match status" value="1"/>
</dbReference>
<dbReference type="PANTHER" id="PTHR11777:SF9">
    <property type="entry name" value="ALANINE--TRNA LIGASE, CYTOPLASMIC"/>
    <property type="match status" value="1"/>
</dbReference>
<dbReference type="PANTHER" id="PTHR11777">
    <property type="entry name" value="ALANYL-TRNA SYNTHETASE"/>
    <property type="match status" value="1"/>
</dbReference>
<dbReference type="Pfam" id="PF02272">
    <property type="entry name" value="DHHA1"/>
    <property type="match status" value="1"/>
</dbReference>
<dbReference type="Pfam" id="PF01411">
    <property type="entry name" value="tRNA-synt_2c"/>
    <property type="match status" value="1"/>
</dbReference>
<dbReference type="Pfam" id="PF07973">
    <property type="entry name" value="tRNA_SAD"/>
    <property type="match status" value="1"/>
</dbReference>
<dbReference type="PRINTS" id="PR00980">
    <property type="entry name" value="TRNASYNTHALA"/>
</dbReference>
<dbReference type="SMART" id="SM00863">
    <property type="entry name" value="tRNA_SAD"/>
    <property type="match status" value="1"/>
</dbReference>
<dbReference type="SUPFAM" id="SSF55681">
    <property type="entry name" value="Class II aaRS and biotin synthetases"/>
    <property type="match status" value="1"/>
</dbReference>
<dbReference type="SUPFAM" id="SSF101353">
    <property type="entry name" value="Putative anticodon-binding domain of alanyl-tRNA synthetase (AlaRS)"/>
    <property type="match status" value="1"/>
</dbReference>
<dbReference type="SUPFAM" id="SSF55186">
    <property type="entry name" value="ThrRS/AlaRS common domain"/>
    <property type="match status" value="1"/>
</dbReference>
<dbReference type="SUPFAM" id="SSF50447">
    <property type="entry name" value="Translation proteins"/>
    <property type="match status" value="1"/>
</dbReference>
<dbReference type="PROSITE" id="PS50860">
    <property type="entry name" value="AA_TRNA_LIGASE_II_ALA"/>
    <property type="match status" value="1"/>
</dbReference>
<gene>
    <name evidence="1" type="primary">alaS</name>
    <name type="ordered locus">SE_1301</name>
</gene>
<organism>
    <name type="scientific">Staphylococcus epidermidis (strain ATCC 12228 / FDA PCI 1200)</name>
    <dbReference type="NCBI Taxonomy" id="176280"/>
    <lineage>
        <taxon>Bacteria</taxon>
        <taxon>Bacillati</taxon>
        <taxon>Bacillota</taxon>
        <taxon>Bacilli</taxon>
        <taxon>Bacillales</taxon>
        <taxon>Staphylococcaceae</taxon>
        <taxon>Staphylococcus</taxon>
    </lineage>
</organism>
<protein>
    <recommendedName>
        <fullName evidence="1">Alanine--tRNA ligase</fullName>
        <ecNumber evidence="1">6.1.1.7</ecNumber>
    </recommendedName>
    <alternativeName>
        <fullName evidence="1">Alanyl-tRNA synthetase</fullName>
        <shortName evidence="1">AlaRS</shortName>
    </alternativeName>
</protein>
<comment type="function">
    <text evidence="1">Catalyzes the attachment of alanine to tRNA(Ala) in a two-step reaction: alanine is first activated by ATP to form Ala-AMP and then transferred to the acceptor end of tRNA(Ala). Also edits incorrectly charged Ser-tRNA(Ala) and Gly-tRNA(Ala) via its editing domain.</text>
</comment>
<comment type="catalytic activity">
    <reaction evidence="1">
        <text>tRNA(Ala) + L-alanine + ATP = L-alanyl-tRNA(Ala) + AMP + diphosphate</text>
        <dbReference type="Rhea" id="RHEA:12540"/>
        <dbReference type="Rhea" id="RHEA-COMP:9657"/>
        <dbReference type="Rhea" id="RHEA-COMP:9923"/>
        <dbReference type="ChEBI" id="CHEBI:30616"/>
        <dbReference type="ChEBI" id="CHEBI:33019"/>
        <dbReference type="ChEBI" id="CHEBI:57972"/>
        <dbReference type="ChEBI" id="CHEBI:78442"/>
        <dbReference type="ChEBI" id="CHEBI:78497"/>
        <dbReference type="ChEBI" id="CHEBI:456215"/>
        <dbReference type="EC" id="6.1.1.7"/>
    </reaction>
</comment>
<comment type="cofactor">
    <cofactor evidence="1">
        <name>Zn(2+)</name>
        <dbReference type="ChEBI" id="CHEBI:29105"/>
    </cofactor>
    <text evidence="1">Binds 1 zinc ion per subunit.</text>
</comment>
<comment type="subcellular location">
    <subcellularLocation>
        <location evidence="1">Cytoplasm</location>
    </subcellularLocation>
</comment>
<comment type="domain">
    <text evidence="1">Consists of three domains; the N-terminal catalytic domain, the editing domain and the C-terminal C-Ala domain. The editing domain removes incorrectly charged amino acids, while the C-Ala domain, along with tRNA(Ala), serves as a bridge to cooperatively bring together the editing and aminoacylation centers thus stimulating deacylation of misacylated tRNAs.</text>
</comment>
<comment type="similarity">
    <text evidence="1">Belongs to the class-II aminoacyl-tRNA synthetase family.</text>
</comment>
<evidence type="ECO:0000255" key="1">
    <source>
        <dbReference type="HAMAP-Rule" id="MF_00036"/>
    </source>
</evidence>
<sequence length="876" mass="99451">MKKMKASEIRQKYLDFFVEKGHMIEPSAPLVPIDDDSLLWINSGVATLKKYFDGRETPKKPRIVNSQKAIRTNDIENVGFTARHHTFFEMLGNFSIGDYFKHEAIEFAWEFLTSDKWMGMEPEKLYVTIHPEDTEAFRIWHEDIGLEESRIIRIEGNFWDIGEGPSGPNTEIFYDRGSAYGKDDPAEEMYPGGENERYLEVWNLVFSEFNHNKDNTYTPLPNKNIDTGMGLERMTSISQNVRTNYETDLFMPIIKEVEHVSGKKYLIDDAQDVAFKVIADHIRTISFAIADGALPANEGRGYVLRRLLRRAVRFSQSLGINEPFMYKLVDIVADIMEPYYPNVKDKSNFIKRVIKSEEERFHETLEEGLTILNELIKEAKNSDQVIKGHDAFKLYDTYGFPIELTEELATQENLSVDMPTFEQEMQQQRDRARQARQNSQSMQVQSEVLKNIQDESQFVGYETTDYQSLITHIIYNGEEVKHVEAGETIYFILRETPFYAVSGGQVADKGTVGNESFEINVTDVTKAPNGQNLHKGIVQFGEATQNAKVEARVNKEDRRLIQKNHSATHLLHAALKEVLGDHVNQAGSLVEPERLRFDFSHFGPMTQEEINLVERRVNEEIWRAIDVRIQEMSIEEAKSIGAMALFGEKYGDIVRVVNMAPFSIELCGGIHVNNTAEIGLFKIVSESGTGAGVRRIEALTGKGAFLHLEEIETQFNNIKNHLKVKSDNQVVEKVKQLQEEEKGLLKQLEQRNKEITSLKMGNIEEQVELINNLKVLATEVEIPNPKAIRSTMDDFKSKLQDTIIVLVGQVDGKVSVIATVPKSLTNQVKAGDLIKNMTPIIGGKGGGRPDMAQGGGTQPEKITEALRFIKDYIKNL</sequence>
<keyword id="KW-0030">Aminoacyl-tRNA synthetase</keyword>
<keyword id="KW-0067">ATP-binding</keyword>
<keyword id="KW-0963">Cytoplasm</keyword>
<keyword id="KW-0436">Ligase</keyword>
<keyword id="KW-0479">Metal-binding</keyword>
<keyword id="KW-0547">Nucleotide-binding</keyword>
<keyword id="KW-0648">Protein biosynthesis</keyword>
<keyword id="KW-0694">RNA-binding</keyword>
<keyword id="KW-0820">tRNA-binding</keyword>
<keyword id="KW-0862">Zinc</keyword>
<feature type="chain" id="PRO_0000075207" description="Alanine--tRNA ligase">
    <location>
        <begin position="1"/>
        <end position="876"/>
    </location>
</feature>
<feature type="binding site" evidence="1">
    <location>
        <position position="565"/>
    </location>
    <ligand>
        <name>Zn(2+)</name>
        <dbReference type="ChEBI" id="CHEBI:29105"/>
    </ligand>
</feature>
<feature type="binding site" evidence="1">
    <location>
        <position position="569"/>
    </location>
    <ligand>
        <name>Zn(2+)</name>
        <dbReference type="ChEBI" id="CHEBI:29105"/>
    </ligand>
</feature>
<feature type="binding site" evidence="1">
    <location>
        <position position="667"/>
    </location>
    <ligand>
        <name>Zn(2+)</name>
        <dbReference type="ChEBI" id="CHEBI:29105"/>
    </ligand>
</feature>
<feature type="binding site" evidence="1">
    <location>
        <position position="671"/>
    </location>
    <ligand>
        <name>Zn(2+)</name>
        <dbReference type="ChEBI" id="CHEBI:29105"/>
    </ligand>
</feature>
<accession>Q8CSA7</accession>
<reference key="1">
    <citation type="journal article" date="2003" name="Mol. Microbiol.">
        <title>Genome-based analysis of virulence genes in a non-biofilm-forming Staphylococcus epidermidis strain (ATCC 12228).</title>
        <authorList>
            <person name="Zhang Y.-Q."/>
            <person name="Ren S.-X."/>
            <person name="Li H.-L."/>
            <person name="Wang Y.-X."/>
            <person name="Fu G."/>
            <person name="Yang J."/>
            <person name="Qin Z.-Q."/>
            <person name="Miao Y.-G."/>
            <person name="Wang W.-Y."/>
            <person name="Chen R.-S."/>
            <person name="Shen Y."/>
            <person name="Chen Z."/>
            <person name="Yuan Z.-H."/>
            <person name="Zhao G.-P."/>
            <person name="Qu D."/>
            <person name="Danchin A."/>
            <person name="Wen Y.-M."/>
        </authorList>
    </citation>
    <scope>NUCLEOTIDE SEQUENCE [LARGE SCALE GENOMIC DNA]</scope>
    <source>
        <strain>ATCC 12228 / FDA PCI 1200</strain>
    </source>
</reference>
<name>SYA_STAES</name>